<organism>
    <name type="scientific">Human cytomegalovirus (strain Merlin)</name>
    <name type="common">HHV-5</name>
    <name type="synonym">Human herpesvirus 5</name>
    <dbReference type="NCBI Taxonomy" id="295027"/>
    <lineage>
        <taxon>Viruses</taxon>
        <taxon>Duplodnaviria</taxon>
        <taxon>Heunggongvirae</taxon>
        <taxon>Peploviricota</taxon>
        <taxon>Herviviricetes</taxon>
        <taxon>Herpesvirales</taxon>
        <taxon>Orthoherpesviridae</taxon>
        <taxon>Betaherpesvirinae</taxon>
        <taxon>Cytomegalovirus</taxon>
        <taxon>Cytomegalovirus humanbeta5</taxon>
        <taxon>Human cytomegalovirus</taxon>
    </lineage>
</organism>
<sequence length="129" mass="14989">MRLCRVWLSVCLCAVVLGQCQRETAEKNDYYRVPHYWDACSRALPDQTRYKYVEQLVDLTLNYHYDASHGLDNFDVLKRINVTEVSLLISDFRRQNRRGGTNKRTTFNAAGSLAPHARSLEFSVRLFAN</sequence>
<accession>F5HET4</accession>
<evidence type="ECO:0000255" key="1"/>
<evidence type="ECO:0000269" key="2">
    <source>
    </source>
</evidence>
<evidence type="ECO:0000269" key="3">
    <source>
    </source>
</evidence>
<evidence type="ECO:0000269" key="4">
    <source>
    </source>
</evidence>
<evidence type="ECO:0000269" key="5">
    <source>
    </source>
</evidence>
<evidence type="ECO:0000269" key="6">
    <source>
    </source>
</evidence>
<evidence type="ECO:0000269" key="7">
    <source>
    </source>
</evidence>
<evidence type="ECO:0000269" key="8">
    <source>
    </source>
</evidence>
<evidence type="ECO:0007829" key="9">
    <source>
        <dbReference type="PDB" id="7T4Q"/>
    </source>
</evidence>
<dbReference type="EMBL" id="AY446894">
    <property type="protein sequence ID" value="AAR31670.1"/>
    <property type="molecule type" value="Genomic_DNA"/>
</dbReference>
<dbReference type="RefSeq" id="YP_081566.1">
    <property type="nucleotide sequence ID" value="NC_006273.2"/>
</dbReference>
<dbReference type="PDB" id="5VOB">
    <property type="method" value="X-ray"/>
    <property type="resolution" value="3.02 A"/>
    <property type="chains" value="E=1-129"/>
</dbReference>
<dbReference type="PDB" id="5VOC">
    <property type="method" value="X-ray"/>
    <property type="resolution" value="3.99 A"/>
    <property type="chains" value="E=1-129"/>
</dbReference>
<dbReference type="PDB" id="5VOD">
    <property type="method" value="X-ray"/>
    <property type="resolution" value="5.90 A"/>
    <property type="chains" value="E=1-129"/>
</dbReference>
<dbReference type="PDB" id="7KBB">
    <property type="method" value="EM"/>
    <property type="resolution" value="4.02 A"/>
    <property type="chains" value="E=19-129"/>
</dbReference>
<dbReference type="PDB" id="7M22">
    <property type="method" value="EM"/>
    <property type="resolution" value="3.65 A"/>
    <property type="chains" value="E=19-129"/>
</dbReference>
<dbReference type="PDB" id="7M30">
    <property type="method" value="EM"/>
    <property type="resolution" value="3.81 A"/>
    <property type="chains" value="E=19-129"/>
</dbReference>
<dbReference type="PDB" id="7T4Q">
    <property type="method" value="EM"/>
    <property type="resolution" value="2.90 A"/>
    <property type="chains" value="E=1-129"/>
</dbReference>
<dbReference type="PDB" id="7T4R">
    <property type="method" value="EM"/>
    <property type="resolution" value="3.30 A"/>
    <property type="chains" value="F/O=1-129"/>
</dbReference>
<dbReference type="PDB" id="7T4S">
    <property type="method" value="EM"/>
    <property type="resolution" value="3.10 A"/>
    <property type="chains" value="E=1-129"/>
</dbReference>
<dbReference type="PDBsum" id="5VOB"/>
<dbReference type="PDBsum" id="5VOC"/>
<dbReference type="PDBsum" id="5VOD"/>
<dbReference type="PDBsum" id="7KBB"/>
<dbReference type="PDBsum" id="7M22"/>
<dbReference type="PDBsum" id="7M30"/>
<dbReference type="PDBsum" id="7T4Q"/>
<dbReference type="PDBsum" id="7T4R"/>
<dbReference type="PDBsum" id="7T4S"/>
<dbReference type="SMR" id="F5HET4"/>
<dbReference type="ABCD" id="F5HET4">
    <property type="antibodies" value="1 sequenced antibody"/>
</dbReference>
<dbReference type="GeneID" id="3077493"/>
<dbReference type="KEGG" id="vg:3077493"/>
<dbReference type="Reactome" id="R-HSA-9609690">
    <property type="pathway name" value="HCMV Early Events"/>
</dbReference>
<dbReference type="Reactome" id="R-HSA-9610379">
    <property type="pathway name" value="HCMV Late Events"/>
</dbReference>
<dbReference type="Proteomes" id="UP000000938">
    <property type="component" value="Segment"/>
</dbReference>
<dbReference type="GO" id="GO:0016020">
    <property type="term" value="C:membrane"/>
    <property type="evidence" value="ECO:0007669"/>
    <property type="project" value="UniProtKB-KW"/>
</dbReference>
<dbReference type="GO" id="GO:0019031">
    <property type="term" value="C:viral envelope"/>
    <property type="evidence" value="ECO:0000304"/>
    <property type="project" value="Reactome"/>
</dbReference>
<dbReference type="GO" id="GO:0055036">
    <property type="term" value="C:virion membrane"/>
    <property type="evidence" value="ECO:0007669"/>
    <property type="project" value="UniProtKB-SubCell"/>
</dbReference>
<dbReference type="GO" id="GO:0098670">
    <property type="term" value="P:entry receptor-mediated virion attachment to host cell"/>
    <property type="evidence" value="ECO:0007669"/>
    <property type="project" value="UniProtKB-KW"/>
</dbReference>
<dbReference type="GO" id="GO:0046718">
    <property type="term" value="P:symbiont entry into host cell"/>
    <property type="evidence" value="ECO:0007669"/>
    <property type="project" value="UniProtKB-KW"/>
</dbReference>
<feature type="signal peptide" evidence="1">
    <location>
        <begin position="1"/>
        <end position="18"/>
    </location>
</feature>
<feature type="chain" id="PRO_0000418315" description="Protein UL131A">
    <location>
        <begin position="19"/>
        <end position="129"/>
    </location>
</feature>
<feature type="helix" evidence="9">
    <location>
        <begin position="22"/>
        <end position="25"/>
    </location>
</feature>
<feature type="helix" evidence="9">
    <location>
        <begin position="36"/>
        <end position="40"/>
    </location>
</feature>
<feature type="helix" evidence="9">
    <location>
        <begin position="46"/>
        <end position="68"/>
    </location>
</feature>
<feature type="turn" evidence="9">
    <location>
        <begin position="74"/>
        <end position="76"/>
    </location>
</feature>
<feature type="helix" evidence="9">
    <location>
        <begin position="77"/>
        <end position="79"/>
    </location>
</feature>
<feature type="helix" evidence="9">
    <location>
        <begin position="82"/>
        <end position="94"/>
    </location>
</feature>
<feature type="strand" evidence="9">
    <location>
        <begin position="97"/>
        <end position="100"/>
    </location>
</feature>
<feature type="strand" evidence="9">
    <location>
        <begin position="105"/>
        <end position="113"/>
    </location>
</feature>
<feature type="strand" evidence="9">
    <location>
        <begin position="115"/>
        <end position="126"/>
    </location>
</feature>
<organismHost>
    <name type="scientific">Homo sapiens</name>
    <name type="common">Human</name>
    <dbReference type="NCBI Taxonomy" id="9606"/>
</organismHost>
<name>U131A_HCMVM</name>
<gene>
    <name type="primary">UL131A</name>
</gene>
<comment type="function">
    <text evidence="2 3 4 6 7 8">Plays a role in viral entry into host cells. Forms a pentameric complex at the surface of the viral envelope together with gH, gL, UL130 and UL131. This complex is required for entry in epithelial, endothelial and myeloid host cells (PubMed:17942555, PubMed:23853586). Mechanistically, engages host receptor(s) including neurophilin 2/NRP2 to mediate infection (PubMed:30057110). Contributes to the formation of the complex between UL128, UL130 and gH-gL.</text>
</comment>
<comment type="subunit">
    <text evidence="2 3 7 8">Forms the envelope pentamer complex (PC) composed of gH, gL, UL128, UL130, and UL131A. The pentamer interacts with host NRP2 (PubMed:17942555, PubMed:28783665, PubMed:30057110). The interaction with gH is important for the formation of UL128, UL130, gH-gL complex (PubMed:16894182).</text>
</comment>
<comment type="subcellular location">
    <subcellularLocation>
        <location evidence="2 5">Virion membrane</location>
    </subcellularLocation>
    <text evidence="5">Found as a pentameric complex at the surface of virion envelope.</text>
</comment>
<reference key="1">
    <citation type="journal article" date="2004" name="J. Gen. Virol.">
        <title>Genetic content of wild-type human cytomegalovirus.</title>
        <authorList>
            <person name="Dolan A."/>
            <person name="Cunningham C."/>
            <person name="Hector R.D."/>
            <person name="Hassan-Walker A.F."/>
            <person name="Lee L."/>
            <person name="Addison C."/>
            <person name="Dargan D.J."/>
            <person name="McGeoch D.J."/>
            <person name="Gatherer D."/>
            <person name="Emery V.C."/>
            <person name="Griffiths P.D."/>
            <person name="Sinzger C."/>
            <person name="McSharry B.P."/>
            <person name="Wilkinson G.W.G."/>
            <person name="Davison A.J."/>
        </authorList>
    </citation>
    <scope>NUCLEOTIDE SEQUENCE [LARGE SCALE GENOMIC DNA]</scope>
</reference>
<reference key="2">
    <citation type="journal article" date="2006" name="J. Gen. Virol.">
        <title>Role of human cytomegalovirus UL131A in cell type-specific virus entry and release.</title>
        <authorList>
            <person name="Adler B."/>
            <person name="Scrivano L."/>
            <person name="Ruzcics Z."/>
            <person name="Rupp B."/>
            <person name="Sinzger C."/>
            <person name="Koszinowski U."/>
        </authorList>
    </citation>
    <scope>FUNCTION</scope>
    <scope>SUBCELLULAR LOCATION</scope>
    <scope>INTERACTION WITH GH</scope>
    <source>
        <strain>AD169 with UL131A ORF from isolate VR1814</strain>
    </source>
</reference>
<reference key="3">
    <citation type="journal article" date="2008" name="J. Virol.">
        <title>Characterization of the human cytomegalovirus gH/gL/UL128-131 complex that mediates entry into epithelial and endothelial cells.</title>
        <authorList>
            <person name="Ryckman B.J."/>
            <person name="Rainish B.L."/>
            <person name="Chase M.C."/>
            <person name="Borton J.A."/>
            <person name="Nelson J.A."/>
            <person name="Jarvis M.A."/>
            <person name="Johnson D.C."/>
        </authorList>
    </citation>
    <scope>FUNCTION</scope>
    <scope>INTERACTION WITH GH; GL; UL128 AND UL131A</scope>
</reference>
<reference key="4">
    <citation type="journal article" date="2012" name="J. Virol.">
        <title>Mutational mapping of pUL131A of human cytomegalovirus emphasizes its central role for endothelial cell tropism.</title>
        <authorList>
            <person name="Schuessler A."/>
            <person name="Sampaio K.L."/>
            <person name="Straschewski S."/>
            <person name="Sinzger C."/>
        </authorList>
    </citation>
    <scope>FUNCTION</scope>
    <source>
        <strain>TB40-BAC4</strain>
    </source>
</reference>
<reference key="5">
    <citation type="journal article" date="2013" name="PLoS Pathog.">
        <title>The HCMV gH/gL/UL128-131 complex triggers the specific cellular activation required for efficient viral internalization into target monocytes.</title>
        <authorList>
            <person name="Nogalski M.T."/>
            <person name="Chan G.C."/>
            <person name="Stevenson E.V."/>
            <person name="Collins-McMillen D.K."/>
            <person name="Yurochko A.D."/>
        </authorList>
    </citation>
    <scope>FUNCTION</scope>
</reference>
<reference key="6">
    <citation type="journal article" date="2013" name="J. Virol.">
        <title>Comparative analysis of gO isoforms reveals that strains of human cytomegalovirus differ in the ratio of gH/gL/gO and gH/gL/UL128-131 in the virion envelope.</title>
        <authorList>
            <person name="Zhou M."/>
            <person name="Yu Q."/>
            <person name="Wechsler A."/>
            <person name="Ryckman B.J."/>
        </authorList>
    </citation>
    <scope>SUBCELLULAR LOCATION</scope>
</reference>
<reference key="7">
    <citation type="journal article" date="2018" name="Cell">
        <title>An Unbiased Screen for Human Cytomegalovirus Identifies Neuropilin-2 as a Central Viral Receptor.</title>
        <authorList>
            <person name="Martinez-Martin N."/>
            <person name="Marcandalli J."/>
            <person name="Huang C.S."/>
            <person name="Arthur C.P."/>
            <person name="Perotti M."/>
            <person name="Foglierini M."/>
            <person name="Ho H."/>
            <person name="Dosey A.M."/>
            <person name="Shriver S."/>
            <person name="Payandeh J."/>
            <person name="Leitner A."/>
            <person name="Lanzavecchia A."/>
            <person name="Perez L."/>
            <person name="Ciferri C."/>
        </authorList>
    </citation>
    <scope>FUNCTION</scope>
    <scope>INTERACTION WITH HOST NRP2</scope>
</reference>
<reference key="8">
    <citation type="journal article" date="2017" name="Sci. Immunol.">
        <title>Structural basis for potent antibody-mediated neutralization of human cytomegalovirus.</title>
        <authorList>
            <person name="Chandramouli S."/>
            <person name="Malito E."/>
            <person name="Nguyen T."/>
            <person name="Luisi K."/>
            <person name="Donnarumma D."/>
            <person name="Xing Y."/>
            <person name="Norais N."/>
            <person name="Yu D."/>
            <person name="Carfi A."/>
        </authorList>
    </citation>
    <scope>X-RAY CRYSTALLOGRAPHY (3.02 ANGSTROMS) OF 1-129</scope>
    <scope>FUNCTION</scope>
    <scope>INTERACTION WITH GH; GL; UL128 AND UL130</scope>
</reference>
<proteinExistence type="evidence at protein level"/>
<protein>
    <recommendedName>
        <fullName>Protein UL131A</fullName>
    </recommendedName>
</protein>
<keyword id="KW-0002">3D-structure</keyword>
<keyword id="KW-0945">Host-virus interaction</keyword>
<keyword id="KW-0472">Membrane</keyword>
<keyword id="KW-1185">Reference proteome</keyword>
<keyword id="KW-0732">Signal</keyword>
<keyword id="KW-1161">Viral attachment to host cell</keyword>
<keyword id="KW-1234">Viral attachment to host entry receptor</keyword>
<keyword id="KW-0261">Viral envelope protein</keyword>
<keyword id="KW-0946">Virion</keyword>
<keyword id="KW-1160">Virus entry into host cell</keyword>